<sequence length="417" mass="44576">MLEQMGIAAKQASYKLAQLSSREKNRVLEKIADELEAQSESILNANAQDVADARANGLSEAMLDRLALTPARLKGIADDVRQVCNLADPVGQVIDGGVLDSGLRLERRRVPLGVIGVIYEARPNVTVDVASLCLKTGNAVILRGGKETCRTNAATVAVIQDALKSCGLPAGAVQAIDNPDRALVSEMLRMDKYIDMLIPRGGAGLHKLCREQSTIPVITGGIGVCHIYVDESAEIAEALKVIVNAKTQRPSTCNTVETLLVNKNIADSFLPALSKQMAESGVTLHADAAALAQLQAGPAKVVAVKAEEYDDEFLSLDLNVKIVSDLDDAIAHIREHGTQHSDAILTRDMRNAQRFVNEVDSSAVYVNASTRFTDGGQFGLGAEVAVSTQKLHARGPMGLEALTTYKWIGIGDYTIRA</sequence>
<dbReference type="EC" id="1.2.1.41" evidence="1"/>
<dbReference type="EMBL" id="CU928161">
    <property type="protein sequence ID" value="CAR01633.1"/>
    <property type="molecule type" value="Genomic_DNA"/>
</dbReference>
<dbReference type="RefSeq" id="WP_000893305.1">
    <property type="nucleotide sequence ID" value="NC_011742.1"/>
</dbReference>
<dbReference type="SMR" id="B7MC93"/>
<dbReference type="KEGG" id="ecz:ECS88_0278"/>
<dbReference type="HOGENOM" id="CLU_030231_0_0_6"/>
<dbReference type="UniPathway" id="UPA00098">
    <property type="reaction ID" value="UER00360"/>
</dbReference>
<dbReference type="Proteomes" id="UP000000747">
    <property type="component" value="Chromosome"/>
</dbReference>
<dbReference type="GO" id="GO:0005737">
    <property type="term" value="C:cytoplasm"/>
    <property type="evidence" value="ECO:0007669"/>
    <property type="project" value="UniProtKB-SubCell"/>
</dbReference>
<dbReference type="GO" id="GO:0004350">
    <property type="term" value="F:glutamate-5-semialdehyde dehydrogenase activity"/>
    <property type="evidence" value="ECO:0007669"/>
    <property type="project" value="UniProtKB-UniRule"/>
</dbReference>
<dbReference type="GO" id="GO:0050661">
    <property type="term" value="F:NADP binding"/>
    <property type="evidence" value="ECO:0007669"/>
    <property type="project" value="InterPro"/>
</dbReference>
<dbReference type="GO" id="GO:0055129">
    <property type="term" value="P:L-proline biosynthetic process"/>
    <property type="evidence" value="ECO:0007669"/>
    <property type="project" value="UniProtKB-UniRule"/>
</dbReference>
<dbReference type="CDD" id="cd07079">
    <property type="entry name" value="ALDH_F18-19_ProA-GPR"/>
    <property type="match status" value="1"/>
</dbReference>
<dbReference type="FunFam" id="3.40.309.10:FF:000006">
    <property type="entry name" value="Gamma-glutamyl phosphate reductase"/>
    <property type="match status" value="1"/>
</dbReference>
<dbReference type="Gene3D" id="3.40.605.10">
    <property type="entry name" value="Aldehyde Dehydrogenase, Chain A, domain 1"/>
    <property type="match status" value="1"/>
</dbReference>
<dbReference type="Gene3D" id="3.40.309.10">
    <property type="entry name" value="Aldehyde Dehydrogenase, Chain A, domain 2"/>
    <property type="match status" value="1"/>
</dbReference>
<dbReference type="HAMAP" id="MF_00412">
    <property type="entry name" value="ProA"/>
    <property type="match status" value="1"/>
</dbReference>
<dbReference type="InterPro" id="IPR016161">
    <property type="entry name" value="Ald_DH/histidinol_DH"/>
</dbReference>
<dbReference type="InterPro" id="IPR016163">
    <property type="entry name" value="Ald_DH_C"/>
</dbReference>
<dbReference type="InterPro" id="IPR016162">
    <property type="entry name" value="Ald_DH_N"/>
</dbReference>
<dbReference type="InterPro" id="IPR015590">
    <property type="entry name" value="Aldehyde_DH_dom"/>
</dbReference>
<dbReference type="InterPro" id="IPR020593">
    <property type="entry name" value="G-glutamylP_reductase_CS"/>
</dbReference>
<dbReference type="InterPro" id="IPR012134">
    <property type="entry name" value="Glu-5-SA_DH"/>
</dbReference>
<dbReference type="InterPro" id="IPR000965">
    <property type="entry name" value="GPR_dom"/>
</dbReference>
<dbReference type="NCBIfam" id="NF001221">
    <property type="entry name" value="PRK00197.1"/>
    <property type="match status" value="1"/>
</dbReference>
<dbReference type="NCBIfam" id="TIGR00407">
    <property type="entry name" value="proA"/>
    <property type="match status" value="1"/>
</dbReference>
<dbReference type="PANTHER" id="PTHR11063:SF8">
    <property type="entry name" value="DELTA-1-PYRROLINE-5-CARBOXYLATE SYNTHASE"/>
    <property type="match status" value="1"/>
</dbReference>
<dbReference type="PANTHER" id="PTHR11063">
    <property type="entry name" value="GLUTAMATE SEMIALDEHYDE DEHYDROGENASE"/>
    <property type="match status" value="1"/>
</dbReference>
<dbReference type="Pfam" id="PF00171">
    <property type="entry name" value="Aldedh"/>
    <property type="match status" value="1"/>
</dbReference>
<dbReference type="PIRSF" id="PIRSF000151">
    <property type="entry name" value="GPR"/>
    <property type="match status" value="1"/>
</dbReference>
<dbReference type="SUPFAM" id="SSF53720">
    <property type="entry name" value="ALDH-like"/>
    <property type="match status" value="1"/>
</dbReference>
<dbReference type="PROSITE" id="PS01223">
    <property type="entry name" value="PROA"/>
    <property type="match status" value="1"/>
</dbReference>
<evidence type="ECO:0000255" key="1">
    <source>
        <dbReference type="HAMAP-Rule" id="MF_00412"/>
    </source>
</evidence>
<name>PROA_ECO45</name>
<proteinExistence type="inferred from homology"/>
<accession>B7MC93</accession>
<comment type="function">
    <text evidence="1">Catalyzes the NADPH-dependent reduction of L-glutamate 5-phosphate into L-glutamate 5-semialdehyde and phosphate. The product spontaneously undergoes cyclization to form 1-pyrroline-5-carboxylate.</text>
</comment>
<comment type="catalytic activity">
    <reaction evidence="1">
        <text>L-glutamate 5-semialdehyde + phosphate + NADP(+) = L-glutamyl 5-phosphate + NADPH + H(+)</text>
        <dbReference type="Rhea" id="RHEA:19541"/>
        <dbReference type="ChEBI" id="CHEBI:15378"/>
        <dbReference type="ChEBI" id="CHEBI:43474"/>
        <dbReference type="ChEBI" id="CHEBI:57783"/>
        <dbReference type="ChEBI" id="CHEBI:58066"/>
        <dbReference type="ChEBI" id="CHEBI:58274"/>
        <dbReference type="ChEBI" id="CHEBI:58349"/>
        <dbReference type="EC" id="1.2.1.41"/>
    </reaction>
</comment>
<comment type="pathway">
    <text evidence="1">Amino-acid biosynthesis; L-proline biosynthesis; L-glutamate 5-semialdehyde from L-glutamate: step 2/2.</text>
</comment>
<comment type="subcellular location">
    <subcellularLocation>
        <location evidence="1">Cytoplasm</location>
    </subcellularLocation>
</comment>
<comment type="similarity">
    <text evidence="1">Belongs to the gamma-glutamyl phosphate reductase family.</text>
</comment>
<gene>
    <name evidence="1" type="primary">proA</name>
    <name type="ordered locus">ECS88_0278</name>
</gene>
<protein>
    <recommendedName>
        <fullName evidence="1">Gamma-glutamyl phosphate reductase</fullName>
        <shortName evidence="1">GPR</shortName>
        <ecNumber evidence="1">1.2.1.41</ecNumber>
    </recommendedName>
    <alternativeName>
        <fullName evidence="1">Glutamate-5-semialdehyde dehydrogenase</fullName>
    </alternativeName>
    <alternativeName>
        <fullName evidence="1">Glutamyl-gamma-semialdehyde dehydrogenase</fullName>
        <shortName evidence="1">GSA dehydrogenase</shortName>
    </alternativeName>
</protein>
<keyword id="KW-0028">Amino-acid biosynthesis</keyword>
<keyword id="KW-0963">Cytoplasm</keyword>
<keyword id="KW-0521">NADP</keyword>
<keyword id="KW-0560">Oxidoreductase</keyword>
<keyword id="KW-0641">Proline biosynthesis</keyword>
<keyword id="KW-1185">Reference proteome</keyword>
<organism>
    <name type="scientific">Escherichia coli O45:K1 (strain S88 / ExPEC)</name>
    <dbReference type="NCBI Taxonomy" id="585035"/>
    <lineage>
        <taxon>Bacteria</taxon>
        <taxon>Pseudomonadati</taxon>
        <taxon>Pseudomonadota</taxon>
        <taxon>Gammaproteobacteria</taxon>
        <taxon>Enterobacterales</taxon>
        <taxon>Enterobacteriaceae</taxon>
        <taxon>Escherichia</taxon>
    </lineage>
</organism>
<reference key="1">
    <citation type="journal article" date="2009" name="PLoS Genet.">
        <title>Organised genome dynamics in the Escherichia coli species results in highly diverse adaptive paths.</title>
        <authorList>
            <person name="Touchon M."/>
            <person name="Hoede C."/>
            <person name="Tenaillon O."/>
            <person name="Barbe V."/>
            <person name="Baeriswyl S."/>
            <person name="Bidet P."/>
            <person name="Bingen E."/>
            <person name="Bonacorsi S."/>
            <person name="Bouchier C."/>
            <person name="Bouvet O."/>
            <person name="Calteau A."/>
            <person name="Chiapello H."/>
            <person name="Clermont O."/>
            <person name="Cruveiller S."/>
            <person name="Danchin A."/>
            <person name="Diard M."/>
            <person name="Dossat C."/>
            <person name="Karoui M.E."/>
            <person name="Frapy E."/>
            <person name="Garry L."/>
            <person name="Ghigo J.M."/>
            <person name="Gilles A.M."/>
            <person name="Johnson J."/>
            <person name="Le Bouguenec C."/>
            <person name="Lescat M."/>
            <person name="Mangenot S."/>
            <person name="Martinez-Jehanne V."/>
            <person name="Matic I."/>
            <person name="Nassif X."/>
            <person name="Oztas S."/>
            <person name="Petit M.A."/>
            <person name="Pichon C."/>
            <person name="Rouy Z."/>
            <person name="Ruf C.S."/>
            <person name="Schneider D."/>
            <person name="Tourret J."/>
            <person name="Vacherie B."/>
            <person name="Vallenet D."/>
            <person name="Medigue C."/>
            <person name="Rocha E.P.C."/>
            <person name="Denamur E."/>
        </authorList>
    </citation>
    <scope>NUCLEOTIDE SEQUENCE [LARGE SCALE GENOMIC DNA]</scope>
    <source>
        <strain>S88 / ExPEC</strain>
    </source>
</reference>
<feature type="chain" id="PRO_1000193609" description="Gamma-glutamyl phosphate reductase">
    <location>
        <begin position="1"/>
        <end position="417"/>
    </location>
</feature>